<sequence length="77" mass="8539">MRTSGRLLLLCLAVGLLLESQAHPNADAGDATRDVGSDRTSVELSKMLKGWQAEKGQRKASAPKKFYVYPPVRRSFY</sequence>
<name>CH1_CONVC</name>
<accession>W4VSG7</accession>
<keyword id="KW-0165">Cleavage on pair of basic residues</keyword>
<keyword id="KW-0964">Secreted</keyword>
<keyword id="KW-0732">Signal</keyword>
<keyword id="KW-0800">Toxin</keyword>
<dbReference type="EMBL" id="GAIH01000009">
    <property type="protein sequence ID" value="JAB84708.1"/>
    <property type="molecule type" value="mRNA"/>
</dbReference>
<dbReference type="GO" id="GO:0005576">
    <property type="term" value="C:extracellular region"/>
    <property type="evidence" value="ECO:0007669"/>
    <property type="project" value="UniProtKB-SubCell"/>
</dbReference>
<dbReference type="GO" id="GO:0090729">
    <property type="term" value="F:toxin activity"/>
    <property type="evidence" value="ECO:0007669"/>
    <property type="project" value="UniProtKB-KW"/>
</dbReference>
<feature type="signal peptide" evidence="1">
    <location>
        <begin position="1"/>
        <end position="22"/>
    </location>
</feature>
<feature type="propeptide" id="PRO_0000439428" evidence="5">
    <location>
        <begin position="23"/>
        <end position="58"/>
    </location>
</feature>
<feature type="peptide" id="PRO_5004850826" description="Conotoxin Vc1" evidence="4">
    <location>
        <begin position="59"/>
        <end position="72"/>
    </location>
</feature>
<feature type="propeptide" id="PRO_0000439429" evidence="5">
    <location>
        <begin position="73"/>
        <end position="77"/>
    </location>
</feature>
<reference key="1">
    <citation type="journal article" date="2014" name="PLoS ONE">
        <title>Diversity of conotoxin gene superfamilies in the venomous snail, Conus victoriae.</title>
        <authorList>
            <person name="Robinson S.D."/>
            <person name="Safavi-Hemami H."/>
            <person name="McIntosh L.D."/>
            <person name="Purcell A.W."/>
            <person name="Norton R.S."/>
            <person name="Papenfuss A.T."/>
        </authorList>
    </citation>
    <scope>NUCLEOTIDE SEQUENCE [MRNA]</scope>
    <source>
        <tissue>Venom gland</tissue>
    </source>
</reference>
<reference key="2">
    <citation type="journal article" date="2015" name="J. Proteomics">
        <title>Discovery by proteogenomics and characterization of an RF-amide neuropeptide from cone snail venom.</title>
        <authorList>
            <person name="Robinson S.D."/>
            <person name="Safavi-Hemami H."/>
            <person name="Raghuraman S."/>
            <person name="Imperial J.S."/>
            <person name="Papenfuss A.T."/>
            <person name="Teichert R.W."/>
            <person name="Purcell A.W."/>
            <person name="Olivera B.M."/>
            <person name="Norton R.S."/>
        </authorList>
    </citation>
    <scope>NUCLEOTIDE SEQUENCE [MRNA]</scope>
    <scope>IDENTIFICATION BY MASS SPECTROMETRY</scope>
    <scope>SUBCELLULAR LOCATION</scope>
    <scope>TISSUE SPECIFICITY</scope>
    <source>
        <tissue>Venom</tissue>
        <tissue>Venom gland</tissue>
    </source>
</reference>
<proteinExistence type="evidence at protein level"/>
<protein>
    <recommendedName>
        <fullName evidence="4">Conotoxin Vc1</fullName>
    </recommendedName>
    <alternativeName>
        <fullName evidence="3">H_Vc1</fullName>
    </alternativeName>
</protein>
<organism>
    <name type="scientific">Conus victoriae</name>
    <name type="common">Queen Victoria cone</name>
    <dbReference type="NCBI Taxonomy" id="319920"/>
    <lineage>
        <taxon>Eukaryota</taxon>
        <taxon>Metazoa</taxon>
        <taxon>Spiralia</taxon>
        <taxon>Lophotrochozoa</taxon>
        <taxon>Mollusca</taxon>
        <taxon>Gastropoda</taxon>
        <taxon>Caenogastropoda</taxon>
        <taxon>Neogastropoda</taxon>
        <taxon>Conoidea</taxon>
        <taxon>Conidae</taxon>
        <taxon>Conus</taxon>
        <taxon>Cylinder</taxon>
    </lineage>
</organism>
<comment type="function">
    <text evidence="4">Probable toxin.</text>
</comment>
<comment type="subcellular location">
    <subcellularLocation>
        <location evidence="2">Secreted</location>
    </subcellularLocation>
</comment>
<comment type="tissue specificity">
    <text evidence="2">Expressed by the venom duct.</text>
</comment>
<comment type="similarity">
    <text evidence="5">Belongs to the conotoxin H superfamily.</text>
</comment>
<evidence type="ECO:0000255" key="1"/>
<evidence type="ECO:0000269" key="2">
    <source>
    </source>
</evidence>
<evidence type="ECO:0000303" key="3">
    <source>
    </source>
</evidence>
<evidence type="ECO:0000305" key="4"/>
<evidence type="ECO:0000305" key="5">
    <source>
    </source>
</evidence>